<sequence length="470" mass="54251">MFNRVQKEINQIINRGFDRTLRLAVTGLSRSGKTAFITSLINQLLSINQHSSQNLPLFEAARNGSILAVKRVSQQDLSVPRFDYESNLNDLSQNPPQWFQSTRGVSETRLAIRFQRQSGLLRHLKERGTLYLDIFDYPGEWLLDLPLLNLDFQQWSQEQIKVTTGVRAELAQNWLSMLQNLDLSAVANEDVLAKIAKSYTDYLHQCKAQGMQFIQPGRFVLPSDLEGAPALQFFPLIHLSGEHWQTLKKTAKSNSYFAVLTKRYNYYRNKIVKGFYENYFSTFDRQVILADCLTPLNHSQQAFLDMQMGLNQLFNNFHYGSRNFLHRLFSPQIDRLMFVATKADHITRDQIPNLVSLMRQIVQEGGRHVEFEGIDTEYTAIAAVRTTKQVIVNQQGKEIKAIQGVRSIDKQLITLYPGTVPSKLPKTEFWQKQPHFDFDSFEPQPLEQGESIPHLRMDAVLQFLLSDRFE</sequence>
<feature type="chain" id="PRO_0000168897" description="Ras-like GTPase HI_1637">
    <location>
        <begin position="1"/>
        <end position="470"/>
    </location>
</feature>
<feature type="short sequence motif" description="Walker A motif" evidence="1">
    <location>
        <begin position="27"/>
        <end position="34"/>
    </location>
</feature>
<feature type="binding site" evidence="1">
    <location>
        <position position="29"/>
    </location>
    <ligand>
        <name>GTP</name>
        <dbReference type="ChEBI" id="CHEBI:37565"/>
    </ligand>
</feature>
<feature type="binding site" evidence="1">
    <location>
        <position position="32"/>
    </location>
    <ligand>
        <name>GDP</name>
        <dbReference type="ChEBI" id="CHEBI:58189"/>
    </ligand>
</feature>
<feature type="binding site" evidence="1">
    <location>
        <position position="32"/>
    </location>
    <ligand>
        <name>GTP</name>
        <dbReference type="ChEBI" id="CHEBI:37565"/>
    </ligand>
</feature>
<feature type="binding site" evidence="1">
    <location>
        <position position="33"/>
    </location>
    <ligand>
        <name>GDP</name>
        <dbReference type="ChEBI" id="CHEBI:58189"/>
    </ligand>
</feature>
<feature type="binding site" evidence="1">
    <location>
        <position position="33"/>
    </location>
    <ligand>
        <name>GTP</name>
        <dbReference type="ChEBI" id="CHEBI:37565"/>
    </ligand>
</feature>
<feature type="binding site" evidence="1">
    <location>
        <position position="34"/>
    </location>
    <ligand>
        <name>GDP</name>
        <dbReference type="ChEBI" id="CHEBI:58189"/>
    </ligand>
</feature>
<feature type="binding site" evidence="1">
    <location>
        <position position="34"/>
    </location>
    <ligand>
        <name>GTP</name>
        <dbReference type="ChEBI" id="CHEBI:37565"/>
    </ligand>
</feature>
<feature type="binding site" evidence="1">
    <location>
        <position position="35"/>
    </location>
    <ligand>
        <name>GDP</name>
        <dbReference type="ChEBI" id="CHEBI:58189"/>
    </ligand>
</feature>
<feature type="binding site" evidence="1">
    <location>
        <position position="35"/>
    </location>
    <ligand>
        <name>GTP</name>
        <dbReference type="ChEBI" id="CHEBI:37565"/>
    </ligand>
</feature>
<feature type="binding site" evidence="1">
    <location>
        <position position="98"/>
    </location>
    <ligand>
        <name>GDP</name>
        <dbReference type="ChEBI" id="CHEBI:58189"/>
    </ligand>
</feature>
<feature type="binding site" evidence="1">
    <location>
        <position position="98"/>
    </location>
    <ligand>
        <name>GTP</name>
        <dbReference type="ChEBI" id="CHEBI:37565"/>
    </ligand>
</feature>
<feature type="binding site" evidence="1">
    <location>
        <position position="101"/>
    </location>
    <ligand>
        <name>GDP</name>
        <dbReference type="ChEBI" id="CHEBI:58189"/>
    </ligand>
</feature>
<feature type="binding site" evidence="1">
    <location>
        <position position="101"/>
    </location>
    <ligand>
        <name>GTP</name>
        <dbReference type="ChEBI" id="CHEBI:37565"/>
    </ligand>
</feature>
<feature type="binding site" evidence="1">
    <location>
        <position position="102"/>
    </location>
    <ligand>
        <name>GDP</name>
        <dbReference type="ChEBI" id="CHEBI:58189"/>
    </ligand>
</feature>
<feature type="binding site" evidence="1">
    <location>
        <position position="102"/>
    </location>
    <ligand>
        <name>GTP</name>
        <dbReference type="ChEBI" id="CHEBI:37565"/>
    </ligand>
</feature>
<feature type="binding site" evidence="1">
    <location>
        <position position="103"/>
    </location>
    <ligand>
        <name>GTP</name>
        <dbReference type="ChEBI" id="CHEBI:37565"/>
    </ligand>
</feature>
<feature type="binding site" evidence="1">
    <location>
        <position position="342"/>
    </location>
    <ligand>
        <name>GDP</name>
        <dbReference type="ChEBI" id="CHEBI:58189"/>
    </ligand>
</feature>
<feature type="binding site" evidence="1">
    <location>
        <position position="342"/>
    </location>
    <ligand>
        <name>GTP</name>
        <dbReference type="ChEBI" id="CHEBI:37565"/>
    </ligand>
</feature>
<feature type="binding site" evidence="1">
    <location>
        <position position="344"/>
    </location>
    <ligand>
        <name>GDP</name>
        <dbReference type="ChEBI" id="CHEBI:58189"/>
    </ligand>
</feature>
<feature type="binding site" evidence="1">
    <location>
        <position position="344"/>
    </location>
    <ligand>
        <name>GTP</name>
        <dbReference type="ChEBI" id="CHEBI:37565"/>
    </ligand>
</feature>
<feature type="binding site" evidence="1">
    <location>
        <position position="345"/>
    </location>
    <ligand>
        <name>GDP</name>
        <dbReference type="ChEBI" id="CHEBI:58189"/>
    </ligand>
</feature>
<feature type="binding site" evidence="1">
    <location>
        <position position="345"/>
    </location>
    <ligand>
        <name>GTP</name>
        <dbReference type="ChEBI" id="CHEBI:37565"/>
    </ligand>
</feature>
<feature type="binding site" evidence="1">
    <location>
        <position position="383"/>
    </location>
    <ligand>
        <name>GDP</name>
        <dbReference type="ChEBI" id="CHEBI:58189"/>
    </ligand>
</feature>
<feature type="binding site" evidence="1">
    <location>
        <position position="384"/>
    </location>
    <ligand>
        <name>GDP</name>
        <dbReference type="ChEBI" id="CHEBI:58189"/>
    </ligand>
</feature>
<feature type="binding site" evidence="1">
    <location>
        <position position="384"/>
    </location>
    <ligand>
        <name>GTP</name>
        <dbReference type="ChEBI" id="CHEBI:37565"/>
    </ligand>
</feature>
<reference key="1">
    <citation type="journal article" date="1995" name="Science">
        <title>Whole-genome random sequencing and assembly of Haemophilus influenzae Rd.</title>
        <authorList>
            <person name="Fleischmann R.D."/>
            <person name="Adams M.D."/>
            <person name="White O."/>
            <person name="Clayton R.A."/>
            <person name="Kirkness E.F."/>
            <person name="Kerlavage A.R."/>
            <person name="Bult C.J."/>
            <person name="Tomb J.-F."/>
            <person name="Dougherty B.A."/>
            <person name="Merrick J.M."/>
            <person name="McKenney K."/>
            <person name="Sutton G.G."/>
            <person name="FitzHugh W."/>
            <person name="Fields C.A."/>
            <person name="Gocayne J.D."/>
            <person name="Scott J.D."/>
            <person name="Shirley R."/>
            <person name="Liu L.-I."/>
            <person name="Glodek A."/>
            <person name="Kelley J.M."/>
            <person name="Weidman J.F."/>
            <person name="Phillips C.A."/>
            <person name="Spriggs T."/>
            <person name="Hedblom E."/>
            <person name="Cotton M.D."/>
            <person name="Utterback T.R."/>
            <person name="Hanna M.C."/>
            <person name="Nguyen D.T."/>
            <person name="Saudek D.M."/>
            <person name="Brandon R.C."/>
            <person name="Fine L.D."/>
            <person name="Fritchman J.L."/>
            <person name="Fuhrmann J.L."/>
            <person name="Geoghagen N.S.M."/>
            <person name="Gnehm C.L."/>
            <person name="McDonald L.A."/>
            <person name="Small K.V."/>
            <person name="Fraser C.M."/>
            <person name="Smith H.O."/>
            <person name="Venter J.C."/>
        </authorList>
    </citation>
    <scope>NUCLEOTIDE SEQUENCE [LARGE SCALE GENOMIC DNA]</scope>
    <source>
        <strain>ATCC 51907 / DSM 11121 / KW20 / Rd</strain>
    </source>
</reference>
<keyword id="KW-0342">GTP-binding</keyword>
<keyword id="KW-0378">Hydrolase</keyword>
<keyword id="KW-0547">Nucleotide-binding</keyword>
<keyword id="KW-1185">Reference proteome</keyword>
<accession>P44280</accession>
<protein>
    <recommendedName>
        <fullName evidence="2">Ras-like GTPase HI_1637</fullName>
        <ecNumber evidence="1">3.6.5.2</ecNumber>
    </recommendedName>
    <alternativeName>
        <fullName evidence="2">Stress protein HI_1637</fullName>
    </alternativeName>
</protein>
<comment type="function">
    <text evidence="1">Binds GTP and GDP. Has intrinsic GTPase activity. Does not hydrolyze ATP. May act as a transducer of stress responses.</text>
</comment>
<comment type="catalytic activity">
    <reaction evidence="1">
        <text>GTP + H2O = GDP + phosphate + H(+)</text>
        <dbReference type="Rhea" id="RHEA:19669"/>
        <dbReference type="ChEBI" id="CHEBI:15377"/>
        <dbReference type="ChEBI" id="CHEBI:15378"/>
        <dbReference type="ChEBI" id="CHEBI:37565"/>
        <dbReference type="ChEBI" id="CHEBI:43474"/>
        <dbReference type="ChEBI" id="CHEBI:58189"/>
        <dbReference type="EC" id="3.6.5.2"/>
    </reaction>
</comment>
<comment type="cofactor">
    <cofactor evidence="1">
        <name>Mg(2+)</name>
        <dbReference type="ChEBI" id="CHEBI:18420"/>
    </cofactor>
</comment>
<comment type="activity regulation">
    <text evidence="1">Alternates between an inactive form bound to GDP and an active form bound to GTP. Likely activated by a guanine nucleotide-exchange factor (GEF).</text>
</comment>
<comment type="subunit">
    <text evidence="1">Monomer in solution.</text>
</comment>
<comment type="similarity">
    <text evidence="2">To E.coli YcjX.</text>
</comment>
<evidence type="ECO:0000250" key="1">
    <source>
        <dbReference type="UniProtKB" id="Q8EG04"/>
    </source>
</evidence>
<evidence type="ECO:0000305" key="2"/>
<name>Y1637_HAEIN</name>
<gene>
    <name type="ordered locus">HI_1637</name>
</gene>
<organism>
    <name type="scientific">Haemophilus influenzae (strain ATCC 51907 / DSM 11121 / KW20 / Rd)</name>
    <dbReference type="NCBI Taxonomy" id="71421"/>
    <lineage>
        <taxon>Bacteria</taxon>
        <taxon>Pseudomonadati</taxon>
        <taxon>Pseudomonadota</taxon>
        <taxon>Gammaproteobacteria</taxon>
        <taxon>Pasteurellales</taxon>
        <taxon>Pasteurellaceae</taxon>
        <taxon>Haemophilus</taxon>
    </lineage>
</organism>
<dbReference type="EC" id="3.6.5.2" evidence="1"/>
<dbReference type="EMBL" id="L42023">
    <property type="protein sequence ID" value="AAC23282.1"/>
    <property type="molecule type" value="Genomic_DNA"/>
</dbReference>
<dbReference type="PIR" id="B64039">
    <property type="entry name" value="B64039"/>
</dbReference>
<dbReference type="RefSeq" id="NP_439779.1">
    <property type="nucleotide sequence ID" value="NC_000907.1"/>
</dbReference>
<dbReference type="SMR" id="P44280"/>
<dbReference type="STRING" id="71421.HI_1637"/>
<dbReference type="EnsemblBacteria" id="AAC23282">
    <property type="protein sequence ID" value="AAC23282"/>
    <property type="gene ID" value="HI_1637"/>
</dbReference>
<dbReference type="KEGG" id="hin:HI_1637"/>
<dbReference type="PATRIC" id="fig|71421.8.peg.1713"/>
<dbReference type="eggNOG" id="COG3106">
    <property type="taxonomic scope" value="Bacteria"/>
</dbReference>
<dbReference type="HOGENOM" id="CLU_043657_0_0_6"/>
<dbReference type="OrthoDB" id="9777645at2"/>
<dbReference type="PhylomeDB" id="P44280"/>
<dbReference type="BioCyc" id="HINF71421:G1GJ1-1654-MONOMER"/>
<dbReference type="Proteomes" id="UP000000579">
    <property type="component" value="Chromosome"/>
</dbReference>
<dbReference type="GO" id="GO:0019003">
    <property type="term" value="F:GDP binding"/>
    <property type="evidence" value="ECO:0000250"/>
    <property type="project" value="UniProtKB"/>
</dbReference>
<dbReference type="GO" id="GO:0005525">
    <property type="term" value="F:GTP binding"/>
    <property type="evidence" value="ECO:0000250"/>
    <property type="project" value="UniProtKB"/>
</dbReference>
<dbReference type="GO" id="GO:0003924">
    <property type="term" value="F:GTPase activity"/>
    <property type="evidence" value="ECO:0000250"/>
    <property type="project" value="UniProtKB"/>
</dbReference>
<dbReference type="InterPro" id="IPR007413">
    <property type="entry name" value="YcjX-like"/>
</dbReference>
<dbReference type="PANTHER" id="PTHR38605:SF1">
    <property type="entry name" value="ATPASE"/>
    <property type="match status" value="1"/>
</dbReference>
<dbReference type="PANTHER" id="PTHR38605">
    <property type="entry name" value="ATPASE-RELATED"/>
    <property type="match status" value="1"/>
</dbReference>
<dbReference type="Pfam" id="PF04317">
    <property type="entry name" value="DUF463"/>
    <property type="match status" value="1"/>
</dbReference>
<dbReference type="PIRSF" id="PIRSF019381">
    <property type="entry name" value="YcjX"/>
    <property type="match status" value="1"/>
</dbReference>
<proteinExistence type="inferred from homology"/>